<feature type="chain" id="PRO_0000286456" description="3-deoxy-D-manno-octulosonic acid transferase">
    <location>
        <begin position="1"/>
        <end position="464"/>
    </location>
</feature>
<feature type="transmembrane region" description="Helical; Signal-anchor" evidence="2">
    <location>
        <begin position="2"/>
        <end position="22"/>
    </location>
</feature>
<feature type="domain" description="RPE1 insert">
    <location>
        <begin position="47"/>
        <end position="93"/>
    </location>
</feature>
<feature type="active site" description="Proton acceptor" evidence="1">
    <location>
        <position position="107"/>
    </location>
</feature>
<feature type="binding site" evidence="1">
    <location>
        <begin position="311"/>
        <end position="312"/>
    </location>
    <ligand>
        <name>CMP</name>
        <dbReference type="ChEBI" id="CHEBI:60377"/>
    </ligand>
</feature>
<feature type="binding site" evidence="1">
    <location>
        <begin position="352"/>
        <end position="354"/>
    </location>
    <ligand>
        <name>CMP</name>
        <dbReference type="ChEBI" id="CHEBI:60377"/>
    </ligand>
</feature>
<feature type="binding site" evidence="1">
    <location>
        <begin position="377"/>
        <end position="380"/>
    </location>
    <ligand>
        <name>CMP</name>
        <dbReference type="ChEBI" id="CHEBI:60377"/>
    </ligand>
</feature>
<feature type="site" description="Transition state stabilizer" evidence="1">
    <location>
        <position position="177"/>
    </location>
</feature>
<feature type="site" description="Transition state stabilizer" evidence="1">
    <location>
        <position position="252"/>
    </location>
</feature>
<evidence type="ECO:0000250" key="1"/>
<evidence type="ECO:0000255" key="2"/>
<evidence type="ECO:0000305" key="3"/>
<dbReference type="EC" id="2.4.99.12"/>
<dbReference type="EMBL" id="CP000053">
    <property type="protein sequence ID" value="AAY60923.1"/>
    <property type="molecule type" value="Genomic_DNA"/>
</dbReference>
<dbReference type="SMR" id="Q4UND5"/>
<dbReference type="STRING" id="315456.RF_0072"/>
<dbReference type="CAZy" id="GT30">
    <property type="family name" value="Glycosyltransferase Family 30"/>
</dbReference>
<dbReference type="KEGG" id="rfe:RF_0072"/>
<dbReference type="eggNOG" id="COG1519">
    <property type="taxonomic scope" value="Bacteria"/>
</dbReference>
<dbReference type="HOGENOM" id="CLU_036146_2_0_5"/>
<dbReference type="OrthoDB" id="9789797at2"/>
<dbReference type="UniPathway" id="UPA00958"/>
<dbReference type="Proteomes" id="UP000008548">
    <property type="component" value="Chromosome"/>
</dbReference>
<dbReference type="GO" id="GO:0005886">
    <property type="term" value="C:plasma membrane"/>
    <property type="evidence" value="ECO:0007669"/>
    <property type="project" value="UniProtKB-SubCell"/>
</dbReference>
<dbReference type="GO" id="GO:0043842">
    <property type="term" value="F:Kdo transferase activity"/>
    <property type="evidence" value="ECO:0007669"/>
    <property type="project" value="UniProtKB-EC"/>
</dbReference>
<dbReference type="GO" id="GO:0009245">
    <property type="term" value="P:lipid A biosynthetic process"/>
    <property type="evidence" value="ECO:0007669"/>
    <property type="project" value="TreeGrafter"/>
</dbReference>
<dbReference type="GO" id="GO:0009244">
    <property type="term" value="P:lipopolysaccharide core region biosynthetic process"/>
    <property type="evidence" value="ECO:0007669"/>
    <property type="project" value="UniProtKB-UniPathway"/>
</dbReference>
<dbReference type="Gene3D" id="3.40.50.11720">
    <property type="entry name" value="3-Deoxy-D-manno-octulosonic-acid transferase, N-terminal domain"/>
    <property type="match status" value="1"/>
</dbReference>
<dbReference type="Gene3D" id="3.40.50.2000">
    <property type="entry name" value="Glycogen Phosphorylase B"/>
    <property type="match status" value="1"/>
</dbReference>
<dbReference type="InterPro" id="IPR007507">
    <property type="entry name" value="Glycos_transf_N"/>
</dbReference>
<dbReference type="InterPro" id="IPR038107">
    <property type="entry name" value="Glycos_transf_N_sf"/>
</dbReference>
<dbReference type="InterPro" id="IPR039901">
    <property type="entry name" value="Kdotransferase"/>
</dbReference>
<dbReference type="InterPro" id="IPR005728">
    <property type="entry name" value="RPE1"/>
</dbReference>
<dbReference type="NCBIfam" id="NF004389">
    <property type="entry name" value="PRK05749.1-5"/>
    <property type="match status" value="1"/>
</dbReference>
<dbReference type="NCBIfam" id="TIGR01045">
    <property type="entry name" value="RPE1"/>
    <property type="match status" value="1"/>
</dbReference>
<dbReference type="PANTHER" id="PTHR42755:SF1">
    <property type="entry name" value="3-DEOXY-D-MANNO-OCTULOSONIC ACID TRANSFERASE, MITOCHONDRIAL-RELATED"/>
    <property type="match status" value="1"/>
</dbReference>
<dbReference type="PANTHER" id="PTHR42755">
    <property type="entry name" value="3-DEOXY-MANNO-OCTULOSONATE CYTIDYLYLTRANSFERASE"/>
    <property type="match status" value="1"/>
</dbReference>
<dbReference type="Pfam" id="PF04413">
    <property type="entry name" value="Glycos_transf_N"/>
    <property type="match status" value="1"/>
</dbReference>
<reference key="1">
    <citation type="journal article" date="2005" name="PLoS Biol.">
        <title>The genome sequence of Rickettsia felis identifies the first putative conjugative plasmid in an obligate intracellular parasite.</title>
        <authorList>
            <person name="Ogata H."/>
            <person name="Renesto P."/>
            <person name="Audic S."/>
            <person name="Robert C."/>
            <person name="Blanc G."/>
            <person name="Fournier P.-E."/>
            <person name="Parinello H."/>
            <person name="Claverie J.-M."/>
            <person name="Raoult D."/>
        </authorList>
    </citation>
    <scope>NUCLEOTIDE SEQUENCE [LARGE SCALE GENOMIC DNA]</scope>
    <source>
        <strain>ATCC VR-1525 / URRWXCal2</strain>
    </source>
</reference>
<sequence length="464" mass="52959">MMLLYYALSFILLPIYFIIILIRLLIGKEDIRRIQERFAIGKHRQVYSLDFLHNEANKERFKGDTERRTAAYTSVREDSSTGSTSKLPLEASYARSLIWIHAASVGESMAALTLISNISKRYPDIRFLVTSWTNSSAKILTAKLPKIAVHQFLPIDNIIFTRKFLKNWQPNLGIFIESELWPCTINEGARQCKLLLVNARISDKSFKAWLKRKSFFQLILKNFSKIIVQSERDLQKFNELGISDAINLGNIKFANEKLPVNQEELSKLSSHLDNRQVVVFASTHPEDEEVILPIIKNLKEQFLDCYIILIPRHPERVKSIIDNCKSHNLSATAKSQNDLPVLSDDIYIVDRFGEMGLFFSVATISFIGGSFKQGGHNILEAAYFSNCIIFGPDMSKNTDIAKGVLQNEAAIQIKNGEDLLTKLTYLLSPNNSLELKAYRENALKFVENNQKVLDEYLQVITKFL</sequence>
<comment type="function">
    <text evidence="1">Involved in lipopolysaccharide (LPS) biosynthesis. Catalyzes the transfer of 3-deoxy-D-manno-octulosonate (Kdo) residue(s) from CMP-Kdo to lipid IV(A), the tetraacyldisaccharide-1,4'-bisphosphate precursor of lipid A.</text>
</comment>
<comment type="catalytic activity">
    <reaction>
        <text>lipid IVA (E. coli) + CMP-3-deoxy-beta-D-manno-octulosonate = alpha-Kdo-(2-&gt;6)-lipid IVA (E. coli) + CMP + H(+)</text>
        <dbReference type="Rhea" id="RHEA:28066"/>
        <dbReference type="ChEBI" id="CHEBI:15378"/>
        <dbReference type="ChEBI" id="CHEBI:58603"/>
        <dbReference type="ChEBI" id="CHEBI:60364"/>
        <dbReference type="ChEBI" id="CHEBI:60377"/>
        <dbReference type="ChEBI" id="CHEBI:85987"/>
        <dbReference type="EC" id="2.4.99.12"/>
    </reaction>
</comment>
<comment type="pathway">
    <text>Bacterial outer membrane biogenesis; LPS core biosynthesis.</text>
</comment>
<comment type="subcellular location">
    <subcellularLocation>
        <location evidence="1">Cell inner membrane</location>
        <topology evidence="1">Single-pass membrane protein</topology>
        <orientation evidence="1">Cytoplasmic side</orientation>
    </subcellularLocation>
</comment>
<comment type="similarity">
    <text evidence="3">Belongs to the glycosyltransferase group 1 family.</text>
</comment>
<organism>
    <name type="scientific">Rickettsia felis (strain ATCC VR-1525 / URRWXCal2)</name>
    <name type="common">Rickettsia azadi</name>
    <dbReference type="NCBI Taxonomy" id="315456"/>
    <lineage>
        <taxon>Bacteria</taxon>
        <taxon>Pseudomonadati</taxon>
        <taxon>Pseudomonadota</taxon>
        <taxon>Alphaproteobacteria</taxon>
        <taxon>Rickettsiales</taxon>
        <taxon>Rickettsiaceae</taxon>
        <taxon>Rickettsieae</taxon>
        <taxon>Rickettsia</taxon>
        <taxon>spotted fever group</taxon>
    </lineage>
</organism>
<protein>
    <recommendedName>
        <fullName>3-deoxy-D-manno-octulosonic acid transferase</fullName>
        <shortName>Kdo transferase</shortName>
        <ecNumber>2.4.99.12</ecNumber>
    </recommendedName>
    <alternativeName>
        <fullName>Lipid IV(A) 3-deoxy-D-manno-octulosonic acid transferase</fullName>
    </alternativeName>
</protein>
<keyword id="KW-0997">Cell inner membrane</keyword>
<keyword id="KW-1003">Cell membrane</keyword>
<keyword id="KW-0448">Lipopolysaccharide biosynthesis</keyword>
<keyword id="KW-0472">Membrane</keyword>
<keyword id="KW-0735">Signal-anchor</keyword>
<keyword id="KW-0808">Transferase</keyword>
<keyword id="KW-0812">Transmembrane</keyword>
<keyword id="KW-1133">Transmembrane helix</keyword>
<name>KDTA_RICFE</name>
<proteinExistence type="inferred from homology"/>
<gene>
    <name type="primary">waaA</name>
    <name type="synonym">kdtA</name>
    <name type="ordered locus">RF_0072</name>
</gene>
<accession>Q4UND5</accession>